<name>ACDH2_MYCMM</name>
<sequence length="308" mass="32288">MPSKASVAIVGSGNISTDLLYKLLRSDWLEPRWMVGIDPQSEGLARARKLGLETTHEGVDWLLAQSDKPDLVFEATSAYVHKAAAPKYAAAGIRAIDLTPAAVGPAVVPPANLREHLDAPNVNMITCGGQATIPIVYAVSRAVADLGGVPYAEIVASVASVSAGPGTRANIDEFTKTTSKGVETIGGARRGKAIIILNPADPPMIMRDTIFCAIPEDADRDAIAASIHEVVAQVQTYVPGYRLLNEPQFDEPSINSGGQAVVTTFVEVEGAGDYLPPYAGNLDIMTAAATKVGEEIAMQTLAVSGGKR</sequence>
<accession>B2HI26</accession>
<reference key="1">
    <citation type="journal article" date="2008" name="Genome Res.">
        <title>Insights from the complete genome sequence of Mycobacterium marinum on the evolution of Mycobacterium tuberculosis.</title>
        <authorList>
            <person name="Stinear T.P."/>
            <person name="Seemann T."/>
            <person name="Harrison P.F."/>
            <person name="Jenkin G.A."/>
            <person name="Davies J.K."/>
            <person name="Johnson P.D."/>
            <person name="Abdellah Z."/>
            <person name="Arrowsmith C."/>
            <person name="Chillingworth T."/>
            <person name="Churcher C."/>
            <person name="Clarke K."/>
            <person name="Cronin A."/>
            <person name="Davis P."/>
            <person name="Goodhead I."/>
            <person name="Holroyd N."/>
            <person name="Jagels K."/>
            <person name="Lord A."/>
            <person name="Moule S."/>
            <person name="Mungall K."/>
            <person name="Norbertczak H."/>
            <person name="Quail M.A."/>
            <person name="Rabbinowitsch E."/>
            <person name="Walker D."/>
            <person name="White B."/>
            <person name="Whitehead S."/>
            <person name="Small P.L."/>
            <person name="Brosch R."/>
            <person name="Ramakrishnan L."/>
            <person name="Fischbach M.A."/>
            <person name="Parkhill J."/>
            <person name="Cole S.T."/>
        </authorList>
    </citation>
    <scope>NUCLEOTIDE SEQUENCE [LARGE SCALE GENOMIC DNA]</scope>
    <source>
        <strain>ATCC BAA-535 / M</strain>
    </source>
</reference>
<comment type="catalytic activity">
    <reaction evidence="1">
        <text>acetaldehyde + NAD(+) + CoA = acetyl-CoA + NADH + H(+)</text>
        <dbReference type="Rhea" id="RHEA:23288"/>
        <dbReference type="ChEBI" id="CHEBI:15343"/>
        <dbReference type="ChEBI" id="CHEBI:15378"/>
        <dbReference type="ChEBI" id="CHEBI:57287"/>
        <dbReference type="ChEBI" id="CHEBI:57288"/>
        <dbReference type="ChEBI" id="CHEBI:57540"/>
        <dbReference type="ChEBI" id="CHEBI:57945"/>
        <dbReference type="EC" id="1.2.1.10"/>
    </reaction>
</comment>
<comment type="similarity">
    <text evidence="1">Belongs to the acetaldehyde dehydrogenase family.</text>
</comment>
<dbReference type="EC" id="1.2.1.10" evidence="1"/>
<dbReference type="EMBL" id="CP000854">
    <property type="protein sequence ID" value="ACC43426.1"/>
    <property type="molecule type" value="Genomic_DNA"/>
</dbReference>
<dbReference type="RefSeq" id="WP_012396546.1">
    <property type="nucleotide sequence ID" value="NC_010612.1"/>
</dbReference>
<dbReference type="SMR" id="B2HI26"/>
<dbReference type="STRING" id="216594.MMAR_5022"/>
<dbReference type="KEGG" id="mmi:MMAR_5022"/>
<dbReference type="eggNOG" id="COG4569">
    <property type="taxonomic scope" value="Bacteria"/>
</dbReference>
<dbReference type="HOGENOM" id="CLU_062208_0_0_11"/>
<dbReference type="OrthoDB" id="9786743at2"/>
<dbReference type="Proteomes" id="UP000001190">
    <property type="component" value="Chromosome"/>
</dbReference>
<dbReference type="GO" id="GO:0008774">
    <property type="term" value="F:acetaldehyde dehydrogenase (acetylating) activity"/>
    <property type="evidence" value="ECO:0007669"/>
    <property type="project" value="UniProtKB-UniRule"/>
</dbReference>
<dbReference type="GO" id="GO:0051287">
    <property type="term" value="F:NAD binding"/>
    <property type="evidence" value="ECO:0007669"/>
    <property type="project" value="UniProtKB-UniRule"/>
</dbReference>
<dbReference type="GO" id="GO:0009056">
    <property type="term" value="P:catabolic process"/>
    <property type="evidence" value="ECO:0007669"/>
    <property type="project" value="UniProtKB-KW"/>
</dbReference>
<dbReference type="CDD" id="cd23933">
    <property type="entry name" value="ALDH_C"/>
    <property type="match status" value="1"/>
</dbReference>
<dbReference type="Gene3D" id="3.30.360.10">
    <property type="entry name" value="Dihydrodipicolinate Reductase, domain 2"/>
    <property type="match status" value="1"/>
</dbReference>
<dbReference type="Gene3D" id="3.40.50.720">
    <property type="entry name" value="NAD(P)-binding Rossmann-like Domain"/>
    <property type="match status" value="1"/>
</dbReference>
<dbReference type="HAMAP" id="MF_01657">
    <property type="entry name" value="Ac_ald_DH_ac"/>
    <property type="match status" value="1"/>
</dbReference>
<dbReference type="InterPro" id="IPR003361">
    <property type="entry name" value="Acetaldehyde_dehydrogenase"/>
</dbReference>
<dbReference type="InterPro" id="IPR015426">
    <property type="entry name" value="Acetylaldehyde_DH_C"/>
</dbReference>
<dbReference type="InterPro" id="IPR036291">
    <property type="entry name" value="NAD(P)-bd_dom_sf"/>
</dbReference>
<dbReference type="InterPro" id="IPR000534">
    <property type="entry name" value="Semialdehyde_DH_NAD-bd"/>
</dbReference>
<dbReference type="NCBIfam" id="TIGR03215">
    <property type="entry name" value="ac_ald_DH_ac"/>
    <property type="match status" value="1"/>
</dbReference>
<dbReference type="NCBIfam" id="NF006157">
    <property type="entry name" value="PRK08300.1"/>
    <property type="match status" value="1"/>
</dbReference>
<dbReference type="Pfam" id="PF09290">
    <property type="entry name" value="AcetDehyd-dimer"/>
    <property type="match status" value="1"/>
</dbReference>
<dbReference type="Pfam" id="PF01118">
    <property type="entry name" value="Semialdhyde_dh"/>
    <property type="match status" value="1"/>
</dbReference>
<dbReference type="PIRSF" id="PIRSF015689">
    <property type="entry name" value="Actaldh_dh_actl"/>
    <property type="match status" value="1"/>
</dbReference>
<dbReference type="SMART" id="SM00859">
    <property type="entry name" value="Semialdhyde_dh"/>
    <property type="match status" value="1"/>
</dbReference>
<dbReference type="SUPFAM" id="SSF55347">
    <property type="entry name" value="Glyceraldehyde-3-phosphate dehydrogenase-like, C-terminal domain"/>
    <property type="match status" value="1"/>
</dbReference>
<dbReference type="SUPFAM" id="SSF51735">
    <property type="entry name" value="NAD(P)-binding Rossmann-fold domains"/>
    <property type="match status" value="1"/>
</dbReference>
<evidence type="ECO:0000255" key="1">
    <source>
        <dbReference type="HAMAP-Rule" id="MF_01657"/>
    </source>
</evidence>
<protein>
    <recommendedName>
        <fullName evidence="1">Acetaldehyde dehydrogenase 2</fullName>
        <ecNumber evidence="1">1.2.1.10</ecNumber>
    </recommendedName>
    <alternativeName>
        <fullName evidence="1">Acetaldehyde dehydrogenase [acetylating] 2</fullName>
    </alternativeName>
</protein>
<gene>
    <name type="ordered locus">MMAR_5022</name>
</gene>
<proteinExistence type="inferred from homology"/>
<organism>
    <name type="scientific">Mycobacterium marinum (strain ATCC BAA-535 / M)</name>
    <dbReference type="NCBI Taxonomy" id="216594"/>
    <lineage>
        <taxon>Bacteria</taxon>
        <taxon>Bacillati</taxon>
        <taxon>Actinomycetota</taxon>
        <taxon>Actinomycetes</taxon>
        <taxon>Mycobacteriales</taxon>
        <taxon>Mycobacteriaceae</taxon>
        <taxon>Mycobacterium</taxon>
        <taxon>Mycobacterium ulcerans group</taxon>
    </lineage>
</organism>
<feature type="chain" id="PRO_0000387678" description="Acetaldehyde dehydrogenase 2">
    <location>
        <begin position="1"/>
        <end position="308"/>
    </location>
</feature>
<feature type="active site" description="Acyl-thioester intermediate" evidence="1">
    <location>
        <position position="127"/>
    </location>
</feature>
<feature type="binding site" evidence="1">
    <location>
        <begin position="12"/>
        <end position="15"/>
    </location>
    <ligand>
        <name>NAD(+)</name>
        <dbReference type="ChEBI" id="CHEBI:57540"/>
    </ligand>
</feature>
<feature type="binding site" evidence="1">
    <location>
        <begin position="162"/>
        <end position="170"/>
    </location>
    <ligand>
        <name>NAD(+)</name>
        <dbReference type="ChEBI" id="CHEBI:57540"/>
    </ligand>
</feature>
<feature type="binding site" evidence="1">
    <location>
        <position position="281"/>
    </location>
    <ligand>
        <name>NAD(+)</name>
        <dbReference type="ChEBI" id="CHEBI:57540"/>
    </ligand>
</feature>
<keyword id="KW-0058">Aromatic hydrocarbons catabolism</keyword>
<keyword id="KW-0520">NAD</keyword>
<keyword id="KW-0560">Oxidoreductase</keyword>
<keyword id="KW-1185">Reference proteome</keyword>